<reference key="1">
    <citation type="submission" date="2008-06" db="EMBL/GenBank/DDBJ databases">
        <title>Genome and proteome analysis of A. pleuropneumoniae serotype 7.</title>
        <authorList>
            <person name="Linke B."/>
            <person name="Buettner F."/>
            <person name="Martinez-Arias R."/>
            <person name="Goesmann A."/>
            <person name="Baltes N."/>
            <person name="Tegetmeyer H."/>
            <person name="Singh M."/>
            <person name="Gerlach G.F."/>
        </authorList>
    </citation>
    <scope>NUCLEOTIDE SEQUENCE [LARGE SCALE GENOMIC DNA]</scope>
    <source>
        <strain>AP76</strain>
    </source>
</reference>
<organism>
    <name type="scientific">Actinobacillus pleuropneumoniae serotype 7 (strain AP76)</name>
    <dbReference type="NCBI Taxonomy" id="537457"/>
    <lineage>
        <taxon>Bacteria</taxon>
        <taxon>Pseudomonadati</taxon>
        <taxon>Pseudomonadota</taxon>
        <taxon>Gammaproteobacteria</taxon>
        <taxon>Pasteurellales</taxon>
        <taxon>Pasteurellaceae</taxon>
        <taxon>Actinobacillus</taxon>
    </lineage>
</organism>
<dbReference type="EMBL" id="CP001091">
    <property type="protein sequence ID" value="ACE60743.1"/>
    <property type="molecule type" value="Genomic_DNA"/>
</dbReference>
<dbReference type="RefSeq" id="WP_005603270.1">
    <property type="nucleotide sequence ID" value="NC_010939.1"/>
</dbReference>
<dbReference type="SMR" id="B3GZT1"/>
<dbReference type="GeneID" id="92743253"/>
<dbReference type="KEGG" id="apa:APP7_0091"/>
<dbReference type="HOGENOM" id="CLU_165255_5_1_6"/>
<dbReference type="Proteomes" id="UP000001226">
    <property type="component" value="Chromosome"/>
</dbReference>
<dbReference type="GO" id="GO:0005737">
    <property type="term" value="C:cytoplasm"/>
    <property type="evidence" value="ECO:0007669"/>
    <property type="project" value="UniProtKB-SubCell"/>
</dbReference>
<dbReference type="GO" id="GO:0097163">
    <property type="term" value="F:sulfur carrier activity"/>
    <property type="evidence" value="ECO:0007669"/>
    <property type="project" value="UniProtKB-UniRule"/>
</dbReference>
<dbReference type="GO" id="GO:0002143">
    <property type="term" value="P:tRNA wobble position uridine thiolation"/>
    <property type="evidence" value="ECO:0007669"/>
    <property type="project" value="InterPro"/>
</dbReference>
<dbReference type="CDD" id="cd03423">
    <property type="entry name" value="SirA"/>
    <property type="match status" value="1"/>
</dbReference>
<dbReference type="Gene3D" id="3.30.110.40">
    <property type="entry name" value="TusA-like domain"/>
    <property type="match status" value="1"/>
</dbReference>
<dbReference type="HAMAP" id="MF_00413">
    <property type="entry name" value="Thiourid_synth_A"/>
    <property type="match status" value="1"/>
</dbReference>
<dbReference type="InterPro" id="IPR022931">
    <property type="entry name" value="Sulphur_carrier_TusA"/>
</dbReference>
<dbReference type="InterPro" id="IPR001455">
    <property type="entry name" value="TusA-like"/>
</dbReference>
<dbReference type="InterPro" id="IPR036868">
    <property type="entry name" value="TusA-like_sf"/>
</dbReference>
<dbReference type="NCBIfam" id="NF001423">
    <property type="entry name" value="PRK00299.1"/>
    <property type="match status" value="1"/>
</dbReference>
<dbReference type="PANTHER" id="PTHR33279:SF2">
    <property type="entry name" value="SULFUR CARRIER PROTEIN TUSA"/>
    <property type="match status" value="1"/>
</dbReference>
<dbReference type="PANTHER" id="PTHR33279">
    <property type="entry name" value="SULFUR CARRIER PROTEIN YEDF-RELATED"/>
    <property type="match status" value="1"/>
</dbReference>
<dbReference type="Pfam" id="PF01206">
    <property type="entry name" value="TusA"/>
    <property type="match status" value="1"/>
</dbReference>
<dbReference type="SUPFAM" id="SSF64307">
    <property type="entry name" value="SirA-like"/>
    <property type="match status" value="1"/>
</dbReference>
<dbReference type="PROSITE" id="PS01148">
    <property type="entry name" value="UPF0033"/>
    <property type="match status" value="1"/>
</dbReference>
<sequence length="79" mass="9100">MTDIKIDQTLDTLGLRCPEPVMLTRKTIRNMAEGEVLLIVADDPATTRDIPSFCEFMDHQLLNSETENTPYRYWVKKGL</sequence>
<protein>
    <recommendedName>
        <fullName evidence="1">Sulfur carrier protein TusA</fullName>
    </recommendedName>
</protein>
<accession>B3GZT1</accession>
<proteinExistence type="inferred from homology"/>
<name>TUSA_ACTP7</name>
<evidence type="ECO:0000255" key="1">
    <source>
        <dbReference type="HAMAP-Rule" id="MF_00413"/>
    </source>
</evidence>
<comment type="function">
    <text evidence="1">Sulfur carrier protein which probably makes part of a sulfur-relay system.</text>
</comment>
<comment type="subcellular location">
    <subcellularLocation>
        <location evidence="1">Cytoplasm</location>
    </subcellularLocation>
</comment>
<comment type="similarity">
    <text evidence="1">Belongs to the sulfur carrier protein TusA family.</text>
</comment>
<gene>
    <name evidence="1" type="primary">tusA</name>
    <name type="ordered locus">APP7_0091</name>
</gene>
<feature type="chain" id="PRO_1000199906" description="Sulfur carrier protein TusA">
    <location>
        <begin position="1"/>
        <end position="79"/>
    </location>
</feature>
<feature type="active site" description="Cysteine persulfide intermediate" evidence="1">
    <location>
        <position position="17"/>
    </location>
</feature>
<keyword id="KW-0963">Cytoplasm</keyword>